<name>AATPD_ARATH</name>
<accession>Q8RY66</accession>
<accession>Q56WV1</accession>
<protein>
    <recommendedName>
        <fullName>AAA-ATPase At4g25835</fullName>
        <ecNumber evidence="1">3.6.1.-</ecNumber>
    </recommendedName>
</protein>
<sequence>MKEYWTSLASLLGVLAFCQSLMNSVFPPELRFAISKLFNKFFKLFSTFCYFDITEIDGVNTNELYNAVQLYLSSSVSIAGNRLSLTRAVNSSSVTFGLSNNDSIVDTFNSVTVVWEHIVTQRQTQTFAWRPMPEEKRGFTLRIKKKDKNLILDSYLDYIMEKANEIRRLNQDRLLYTNSRGGSLDSRGLPWESVPFKHPSTFDTLAMDPVKKQQIMEDLKDFAECQSFYERTGRAWKRGYLLYGPPGTGKSSMIAAMANYLRYDIYDLELTEVKSNSELRKLLMKTSSKSIIVIEDIDCSINLTNRNKKQSTGSYNEPEMLTGSGLGDDLGDGNTITLSGLLNFTDGLWSCCGSERIFVFTTNHIEKLDPALLRSGRMDMHIHMSYCTFSSVKILLRNYLGFEEGDLNDVVLKELAEVVDRAEITPADVSEALIKNRRDKERAVRELLVDLRSRVERNEKNGKSRVQNVSLEEQENRAFDSLYAEENGGEEEEIEDNICKSSDDCS</sequence>
<comment type="catalytic activity">
    <reaction evidence="1">
        <text>ATP + H2O = ADP + phosphate + H(+)</text>
        <dbReference type="Rhea" id="RHEA:13065"/>
        <dbReference type="ChEBI" id="CHEBI:15377"/>
        <dbReference type="ChEBI" id="CHEBI:15378"/>
        <dbReference type="ChEBI" id="CHEBI:30616"/>
        <dbReference type="ChEBI" id="CHEBI:43474"/>
        <dbReference type="ChEBI" id="CHEBI:456216"/>
    </reaction>
</comment>
<comment type="cofactor">
    <cofactor evidence="1">
        <name>Mg(2+)</name>
        <dbReference type="ChEBI" id="CHEBI:18420"/>
    </cofactor>
</comment>
<comment type="similarity">
    <text evidence="4">Belongs to the AAA ATPase family. BCS1 subfamily.</text>
</comment>
<comment type="sequence caution" evidence="4">
    <conflict type="erroneous initiation">
        <sequence resource="EMBL-CDS" id="BAD94360"/>
    </conflict>
    <text>Truncated N-terminus.</text>
</comment>
<organism evidence="5">
    <name type="scientific">Arabidopsis thaliana</name>
    <name type="common">Mouse-ear cress</name>
    <dbReference type="NCBI Taxonomy" id="3702"/>
    <lineage>
        <taxon>Eukaryota</taxon>
        <taxon>Viridiplantae</taxon>
        <taxon>Streptophyta</taxon>
        <taxon>Embryophyta</taxon>
        <taxon>Tracheophyta</taxon>
        <taxon>Spermatophyta</taxon>
        <taxon>Magnoliopsida</taxon>
        <taxon>eudicotyledons</taxon>
        <taxon>Gunneridae</taxon>
        <taxon>Pentapetalae</taxon>
        <taxon>rosids</taxon>
        <taxon>malvids</taxon>
        <taxon>Brassicales</taxon>
        <taxon>Brassicaceae</taxon>
        <taxon>Camelineae</taxon>
        <taxon>Arabidopsis</taxon>
    </lineage>
</organism>
<gene>
    <name evidence="6" type="ordered locus">At4g25835</name>
    <name evidence="7" type="ORF">F14M19.110</name>
</gene>
<evidence type="ECO:0000250" key="1">
    <source>
        <dbReference type="UniProtKB" id="Q9FLD5"/>
    </source>
</evidence>
<evidence type="ECO:0000255" key="2"/>
<evidence type="ECO:0000256" key="3">
    <source>
        <dbReference type="SAM" id="MobiDB-lite"/>
    </source>
</evidence>
<evidence type="ECO:0000305" key="4"/>
<evidence type="ECO:0000312" key="5">
    <source>
        <dbReference type="EMBL" id="AAL91623.1"/>
    </source>
</evidence>
<evidence type="ECO:0000312" key="6">
    <source>
        <dbReference type="EMBL" id="AEE85120.1"/>
    </source>
</evidence>
<evidence type="ECO:0000312" key="7">
    <source>
        <dbReference type="EMBL" id="AL049480"/>
    </source>
</evidence>
<keyword id="KW-0067">ATP-binding</keyword>
<keyword id="KW-0378">Hydrolase</keyword>
<keyword id="KW-0460">Magnesium</keyword>
<keyword id="KW-0547">Nucleotide-binding</keyword>
<keyword id="KW-1185">Reference proteome</keyword>
<keyword id="KW-0732">Signal</keyword>
<reference key="1">
    <citation type="journal article" date="1999" name="Nature">
        <title>Sequence and analysis of chromosome 4 of the plant Arabidopsis thaliana.</title>
        <authorList>
            <person name="Mayer K.F.X."/>
            <person name="Schueller C."/>
            <person name="Wambutt R."/>
            <person name="Murphy G."/>
            <person name="Volckaert G."/>
            <person name="Pohl T."/>
            <person name="Duesterhoeft A."/>
            <person name="Stiekema W."/>
            <person name="Entian K.-D."/>
            <person name="Terryn N."/>
            <person name="Harris B."/>
            <person name="Ansorge W."/>
            <person name="Brandt P."/>
            <person name="Grivell L.A."/>
            <person name="Rieger M."/>
            <person name="Weichselgartner M."/>
            <person name="de Simone V."/>
            <person name="Obermaier B."/>
            <person name="Mache R."/>
            <person name="Mueller M."/>
            <person name="Kreis M."/>
            <person name="Delseny M."/>
            <person name="Puigdomenech P."/>
            <person name="Watson M."/>
            <person name="Schmidtheini T."/>
            <person name="Reichert B."/>
            <person name="Portetelle D."/>
            <person name="Perez-Alonso M."/>
            <person name="Boutry M."/>
            <person name="Bancroft I."/>
            <person name="Vos P."/>
            <person name="Hoheisel J."/>
            <person name="Zimmermann W."/>
            <person name="Wedler H."/>
            <person name="Ridley P."/>
            <person name="Langham S.-A."/>
            <person name="McCullagh B."/>
            <person name="Bilham L."/>
            <person name="Robben J."/>
            <person name="van der Schueren J."/>
            <person name="Grymonprez B."/>
            <person name="Chuang Y.-J."/>
            <person name="Vandenbussche F."/>
            <person name="Braeken M."/>
            <person name="Weltjens I."/>
            <person name="Voet M."/>
            <person name="Bastiaens I."/>
            <person name="Aert R."/>
            <person name="Defoor E."/>
            <person name="Weitzenegger T."/>
            <person name="Bothe G."/>
            <person name="Ramsperger U."/>
            <person name="Hilbert H."/>
            <person name="Braun M."/>
            <person name="Holzer E."/>
            <person name="Brandt A."/>
            <person name="Peters S."/>
            <person name="van Staveren M."/>
            <person name="Dirkse W."/>
            <person name="Mooijman P."/>
            <person name="Klein Lankhorst R."/>
            <person name="Rose M."/>
            <person name="Hauf J."/>
            <person name="Koetter P."/>
            <person name="Berneiser S."/>
            <person name="Hempel S."/>
            <person name="Feldpausch M."/>
            <person name="Lamberth S."/>
            <person name="Van den Daele H."/>
            <person name="De Keyser A."/>
            <person name="Buysshaert C."/>
            <person name="Gielen J."/>
            <person name="Villarroel R."/>
            <person name="De Clercq R."/>
            <person name="van Montagu M."/>
            <person name="Rogers J."/>
            <person name="Cronin A."/>
            <person name="Quail M.A."/>
            <person name="Bray-Allen S."/>
            <person name="Clark L."/>
            <person name="Doggett J."/>
            <person name="Hall S."/>
            <person name="Kay M."/>
            <person name="Lennard N."/>
            <person name="McLay K."/>
            <person name="Mayes R."/>
            <person name="Pettett A."/>
            <person name="Rajandream M.A."/>
            <person name="Lyne M."/>
            <person name="Benes V."/>
            <person name="Rechmann S."/>
            <person name="Borkova D."/>
            <person name="Bloecker H."/>
            <person name="Scharfe M."/>
            <person name="Grimm M."/>
            <person name="Loehnert T.-H."/>
            <person name="Dose S."/>
            <person name="de Haan M."/>
            <person name="Maarse A.C."/>
            <person name="Schaefer M."/>
            <person name="Mueller-Auer S."/>
            <person name="Gabel C."/>
            <person name="Fuchs M."/>
            <person name="Fartmann B."/>
            <person name="Granderath K."/>
            <person name="Dauner D."/>
            <person name="Herzl A."/>
            <person name="Neumann S."/>
            <person name="Argiriou A."/>
            <person name="Vitale D."/>
            <person name="Liguori R."/>
            <person name="Piravandi E."/>
            <person name="Massenet O."/>
            <person name="Quigley F."/>
            <person name="Clabauld G."/>
            <person name="Muendlein A."/>
            <person name="Felber R."/>
            <person name="Schnabl S."/>
            <person name="Hiller R."/>
            <person name="Schmidt W."/>
            <person name="Lecharny A."/>
            <person name="Aubourg S."/>
            <person name="Chefdor F."/>
            <person name="Cooke R."/>
            <person name="Berger C."/>
            <person name="Monfort A."/>
            <person name="Casacuberta E."/>
            <person name="Gibbons T."/>
            <person name="Weber N."/>
            <person name="Vandenbol M."/>
            <person name="Bargues M."/>
            <person name="Terol J."/>
            <person name="Torres A."/>
            <person name="Perez-Perez A."/>
            <person name="Purnelle B."/>
            <person name="Bent E."/>
            <person name="Johnson S."/>
            <person name="Tacon D."/>
            <person name="Jesse T."/>
            <person name="Heijnen L."/>
            <person name="Schwarz S."/>
            <person name="Scholler P."/>
            <person name="Heber S."/>
            <person name="Francs P."/>
            <person name="Bielke C."/>
            <person name="Frishman D."/>
            <person name="Haase D."/>
            <person name="Lemcke K."/>
            <person name="Mewes H.-W."/>
            <person name="Stocker S."/>
            <person name="Zaccaria P."/>
            <person name="Bevan M."/>
            <person name="Wilson R.K."/>
            <person name="de la Bastide M."/>
            <person name="Habermann K."/>
            <person name="Parnell L."/>
            <person name="Dedhia N."/>
            <person name="Gnoj L."/>
            <person name="Schutz K."/>
            <person name="Huang E."/>
            <person name="Spiegel L."/>
            <person name="Sekhon M."/>
            <person name="Murray J."/>
            <person name="Sheet P."/>
            <person name="Cordes M."/>
            <person name="Abu-Threideh J."/>
            <person name="Stoneking T."/>
            <person name="Kalicki J."/>
            <person name="Graves T."/>
            <person name="Harmon G."/>
            <person name="Edwards J."/>
            <person name="Latreille P."/>
            <person name="Courtney L."/>
            <person name="Cloud J."/>
            <person name="Abbott A."/>
            <person name="Scott K."/>
            <person name="Johnson D."/>
            <person name="Minx P."/>
            <person name="Bentley D."/>
            <person name="Fulton B."/>
            <person name="Miller N."/>
            <person name="Greco T."/>
            <person name="Kemp K."/>
            <person name="Kramer J."/>
            <person name="Fulton L."/>
            <person name="Mardis E."/>
            <person name="Dante M."/>
            <person name="Pepin K."/>
            <person name="Hillier L.W."/>
            <person name="Nelson J."/>
            <person name="Spieth J."/>
            <person name="Ryan E."/>
            <person name="Andrews S."/>
            <person name="Geisel C."/>
            <person name="Layman D."/>
            <person name="Du H."/>
            <person name="Ali J."/>
            <person name="Berghoff A."/>
            <person name="Jones K."/>
            <person name="Drone K."/>
            <person name="Cotton M."/>
            <person name="Joshu C."/>
            <person name="Antonoiu B."/>
            <person name="Zidanic M."/>
            <person name="Strong C."/>
            <person name="Sun H."/>
            <person name="Lamar B."/>
            <person name="Yordan C."/>
            <person name="Ma P."/>
            <person name="Zhong J."/>
            <person name="Preston R."/>
            <person name="Vil D."/>
            <person name="Shekher M."/>
            <person name="Matero A."/>
            <person name="Shah R."/>
            <person name="Swaby I.K."/>
            <person name="O'Shaughnessy A."/>
            <person name="Rodriguez M."/>
            <person name="Hoffman J."/>
            <person name="Till S."/>
            <person name="Granat S."/>
            <person name="Shohdy N."/>
            <person name="Hasegawa A."/>
            <person name="Hameed A."/>
            <person name="Lodhi M."/>
            <person name="Johnson A."/>
            <person name="Chen E."/>
            <person name="Marra M.A."/>
            <person name="Martienssen R."/>
            <person name="McCombie W.R."/>
        </authorList>
    </citation>
    <scope>NUCLEOTIDE SEQUENCE [LARGE SCALE GENOMIC DNA]</scope>
    <source>
        <strain>cv. Columbia</strain>
    </source>
</reference>
<reference key="2">
    <citation type="journal article" date="2017" name="Plant J.">
        <title>Araport11: a complete reannotation of the Arabidopsis thaliana reference genome.</title>
        <authorList>
            <person name="Cheng C.Y."/>
            <person name="Krishnakumar V."/>
            <person name="Chan A.P."/>
            <person name="Thibaud-Nissen F."/>
            <person name="Schobel S."/>
            <person name="Town C.D."/>
        </authorList>
    </citation>
    <scope>GENOME REANNOTATION</scope>
    <source>
        <strain>cv. Columbia</strain>
    </source>
</reference>
<reference key="3">
    <citation type="journal article" date="2003" name="Science">
        <title>Empirical analysis of transcriptional activity in the Arabidopsis genome.</title>
        <authorList>
            <person name="Yamada K."/>
            <person name="Lim J."/>
            <person name="Dale J.M."/>
            <person name="Chen H."/>
            <person name="Shinn P."/>
            <person name="Palm C.J."/>
            <person name="Southwick A.M."/>
            <person name="Wu H.C."/>
            <person name="Kim C.J."/>
            <person name="Nguyen M."/>
            <person name="Pham P.K."/>
            <person name="Cheuk R.F."/>
            <person name="Karlin-Newmann G."/>
            <person name="Liu S.X."/>
            <person name="Lam B."/>
            <person name="Sakano H."/>
            <person name="Wu T."/>
            <person name="Yu G."/>
            <person name="Miranda M."/>
            <person name="Quach H.L."/>
            <person name="Tripp M."/>
            <person name="Chang C.H."/>
            <person name="Lee J.M."/>
            <person name="Toriumi M.J."/>
            <person name="Chan M.M."/>
            <person name="Tang C.C."/>
            <person name="Onodera C.S."/>
            <person name="Deng J.M."/>
            <person name="Akiyama K."/>
            <person name="Ansari Y."/>
            <person name="Arakawa T."/>
            <person name="Banh J."/>
            <person name="Banno F."/>
            <person name="Bowser L."/>
            <person name="Brooks S.Y."/>
            <person name="Carninci P."/>
            <person name="Chao Q."/>
            <person name="Choy N."/>
            <person name="Enju A."/>
            <person name="Goldsmith A.D."/>
            <person name="Gurjal M."/>
            <person name="Hansen N.F."/>
            <person name="Hayashizaki Y."/>
            <person name="Johnson-Hopson C."/>
            <person name="Hsuan V.W."/>
            <person name="Iida K."/>
            <person name="Karnes M."/>
            <person name="Khan S."/>
            <person name="Koesema E."/>
            <person name="Ishida J."/>
            <person name="Jiang P.X."/>
            <person name="Jones T."/>
            <person name="Kawai J."/>
            <person name="Kamiya A."/>
            <person name="Meyers C."/>
            <person name="Nakajima M."/>
            <person name="Narusaka M."/>
            <person name="Seki M."/>
            <person name="Sakurai T."/>
            <person name="Satou M."/>
            <person name="Tamse R."/>
            <person name="Vaysberg M."/>
            <person name="Wallender E.K."/>
            <person name="Wong C."/>
            <person name="Yamamura Y."/>
            <person name="Yuan S."/>
            <person name="Shinozaki K."/>
            <person name="Davis R.W."/>
            <person name="Theologis A."/>
            <person name="Ecker J.R."/>
        </authorList>
    </citation>
    <scope>NUCLEOTIDE SEQUENCE [LARGE SCALE MRNA]</scope>
    <source>
        <strain>cv. Columbia</strain>
    </source>
</reference>
<reference key="4">
    <citation type="submission" date="2005-03" db="EMBL/GenBank/DDBJ databases">
        <title>Large-scale analysis of RIKEN Arabidopsis full-length (RAFL) cDNAs.</title>
        <authorList>
            <person name="Totoki Y."/>
            <person name="Seki M."/>
            <person name="Ishida J."/>
            <person name="Nakajima M."/>
            <person name="Enju A."/>
            <person name="Kamiya A."/>
            <person name="Narusaka M."/>
            <person name="Shin-i T."/>
            <person name="Nakagawa M."/>
            <person name="Sakamoto N."/>
            <person name="Oishi K."/>
            <person name="Kohara Y."/>
            <person name="Kobayashi M."/>
            <person name="Toyoda A."/>
            <person name="Sakaki Y."/>
            <person name="Sakurai T."/>
            <person name="Iida K."/>
            <person name="Akiyama K."/>
            <person name="Satou M."/>
            <person name="Toyoda T."/>
            <person name="Konagaya A."/>
            <person name="Carninci P."/>
            <person name="Kawai J."/>
            <person name="Hayashizaki Y."/>
            <person name="Shinozaki K."/>
        </authorList>
    </citation>
    <scope>NUCLEOTIDE SEQUENCE [LARGE SCALE MRNA] OF 5-506</scope>
    <source>
        <strain>cv. Columbia</strain>
    </source>
</reference>
<feature type="signal peptide" evidence="2">
    <location>
        <begin position="1"/>
        <end position="20"/>
    </location>
</feature>
<feature type="chain" id="PRO_0000434715" description="AAA-ATPase At4g25835" evidence="2">
    <location>
        <begin position="21"/>
        <end position="506"/>
    </location>
</feature>
<feature type="region of interest" description="Disordered" evidence="3">
    <location>
        <begin position="462"/>
        <end position="506"/>
    </location>
</feature>
<feature type="compositionally biased region" description="Acidic residues" evidence="3">
    <location>
        <begin position="487"/>
        <end position="496"/>
    </location>
</feature>
<feature type="compositionally biased region" description="Basic and acidic residues" evidence="3">
    <location>
        <begin position="497"/>
        <end position="506"/>
    </location>
</feature>
<feature type="binding site" evidence="2">
    <location>
        <begin position="244"/>
        <end position="251"/>
    </location>
    <ligand>
        <name>ATP</name>
        <dbReference type="ChEBI" id="CHEBI:30616"/>
    </ligand>
</feature>
<proteinExistence type="evidence at transcript level"/>
<dbReference type="EC" id="3.6.1.-" evidence="1"/>
<dbReference type="EMBL" id="AL049480">
    <property type="status" value="NOT_ANNOTATED_CDS"/>
    <property type="molecule type" value="Genomic_DNA"/>
</dbReference>
<dbReference type="EMBL" id="CP002687">
    <property type="protein sequence ID" value="AEE85120.1"/>
    <property type="molecule type" value="Genomic_DNA"/>
</dbReference>
<dbReference type="EMBL" id="AY075607">
    <property type="protein sequence ID" value="AAL91623.1"/>
    <property type="molecule type" value="mRNA"/>
</dbReference>
<dbReference type="EMBL" id="AK221930">
    <property type="protein sequence ID" value="BAD94360.1"/>
    <property type="status" value="ALT_INIT"/>
    <property type="molecule type" value="mRNA"/>
</dbReference>
<dbReference type="RefSeq" id="NP_567730.1">
    <property type="nucleotide sequence ID" value="NM_118716.5"/>
</dbReference>
<dbReference type="SMR" id="Q8RY66"/>
<dbReference type="FunCoup" id="Q8RY66">
    <property type="interactions" value="1577"/>
</dbReference>
<dbReference type="STRING" id="3702.Q8RY66"/>
<dbReference type="PaxDb" id="3702-AT4G25835.1"/>
<dbReference type="ProteomicsDB" id="244551"/>
<dbReference type="EnsemblPlants" id="AT4G25835.1">
    <property type="protein sequence ID" value="AT4G25835.1"/>
    <property type="gene ID" value="AT4G25835"/>
</dbReference>
<dbReference type="GeneID" id="828689"/>
<dbReference type="Gramene" id="AT4G25835.1">
    <property type="protein sequence ID" value="AT4G25835.1"/>
    <property type="gene ID" value="AT4G25835"/>
</dbReference>
<dbReference type="KEGG" id="ath:AT4G25835"/>
<dbReference type="Araport" id="AT4G25835"/>
<dbReference type="TAIR" id="AT4G25835"/>
<dbReference type="eggNOG" id="KOG0743">
    <property type="taxonomic scope" value="Eukaryota"/>
</dbReference>
<dbReference type="HOGENOM" id="CLU_010189_0_1_1"/>
<dbReference type="InParanoid" id="Q8RY66"/>
<dbReference type="OMA" id="FAECQSF"/>
<dbReference type="PhylomeDB" id="Q8RY66"/>
<dbReference type="PRO" id="PR:Q8RY66"/>
<dbReference type="Proteomes" id="UP000006548">
    <property type="component" value="Chromosome 4"/>
</dbReference>
<dbReference type="ExpressionAtlas" id="Q8RY66">
    <property type="expression patterns" value="baseline and differential"/>
</dbReference>
<dbReference type="GO" id="GO:0005524">
    <property type="term" value="F:ATP binding"/>
    <property type="evidence" value="ECO:0007669"/>
    <property type="project" value="UniProtKB-KW"/>
</dbReference>
<dbReference type="GO" id="GO:0016887">
    <property type="term" value="F:ATP hydrolysis activity"/>
    <property type="evidence" value="ECO:0007669"/>
    <property type="project" value="InterPro"/>
</dbReference>
<dbReference type="GO" id="GO:0006950">
    <property type="term" value="P:response to stress"/>
    <property type="evidence" value="ECO:0007669"/>
    <property type="project" value="UniProtKB-ARBA"/>
</dbReference>
<dbReference type="CDD" id="cd19510">
    <property type="entry name" value="RecA-like_BCS1"/>
    <property type="match status" value="1"/>
</dbReference>
<dbReference type="Gene3D" id="6.10.280.40">
    <property type="match status" value="1"/>
</dbReference>
<dbReference type="Gene3D" id="3.40.50.300">
    <property type="entry name" value="P-loop containing nucleotide triphosphate hydrolases"/>
    <property type="match status" value="1"/>
</dbReference>
<dbReference type="InterPro" id="IPR003593">
    <property type="entry name" value="AAA+_ATPase"/>
</dbReference>
<dbReference type="InterPro" id="IPR025753">
    <property type="entry name" value="AAA_N_dom"/>
</dbReference>
<dbReference type="InterPro" id="IPR003959">
    <property type="entry name" value="ATPase_AAA_core"/>
</dbReference>
<dbReference type="InterPro" id="IPR050747">
    <property type="entry name" value="Mitochondrial_chaperone_BCS1"/>
</dbReference>
<dbReference type="InterPro" id="IPR027417">
    <property type="entry name" value="P-loop_NTPase"/>
</dbReference>
<dbReference type="PANTHER" id="PTHR23070">
    <property type="entry name" value="BCS1 AAA-TYPE ATPASE"/>
    <property type="match status" value="1"/>
</dbReference>
<dbReference type="Pfam" id="PF00004">
    <property type="entry name" value="AAA"/>
    <property type="match status" value="1"/>
</dbReference>
<dbReference type="Pfam" id="PF14363">
    <property type="entry name" value="AAA_assoc"/>
    <property type="match status" value="1"/>
</dbReference>
<dbReference type="SMART" id="SM00382">
    <property type="entry name" value="AAA"/>
    <property type="match status" value="1"/>
</dbReference>
<dbReference type="SUPFAM" id="SSF52540">
    <property type="entry name" value="P-loop containing nucleoside triphosphate hydrolases"/>
    <property type="match status" value="1"/>
</dbReference>